<organism>
    <name type="scientific">Crassostrea virginica</name>
    <name type="common">Eastern oyster</name>
    <dbReference type="NCBI Taxonomy" id="6565"/>
    <lineage>
        <taxon>Eukaryota</taxon>
        <taxon>Metazoa</taxon>
        <taxon>Spiralia</taxon>
        <taxon>Lophotrochozoa</taxon>
        <taxon>Mollusca</taxon>
        <taxon>Bivalvia</taxon>
        <taxon>Autobranchia</taxon>
        <taxon>Pteriomorphia</taxon>
        <taxon>Ostreida</taxon>
        <taxon>Ostreoidea</taxon>
        <taxon>Ostreidae</taxon>
        <taxon>Crassostrea</taxon>
    </lineage>
</organism>
<accession>B3A003</accession>
<accession>P85518</accession>
<proteinExistence type="evidence at protein level"/>
<dbReference type="EC" id="3.2.1.17" evidence="4"/>
<dbReference type="EMBL" id="AB427186">
    <property type="protein sequence ID" value="BAG41979.1"/>
    <property type="molecule type" value="mRNA"/>
</dbReference>
<dbReference type="SMR" id="B3A003"/>
<dbReference type="CAZy" id="GH22">
    <property type="family name" value="Glycoside Hydrolase Family 22"/>
</dbReference>
<dbReference type="OrthoDB" id="6337871at2759"/>
<dbReference type="GO" id="GO:0005576">
    <property type="term" value="C:extracellular region"/>
    <property type="evidence" value="ECO:0007669"/>
    <property type="project" value="UniProtKB-SubCell"/>
</dbReference>
<dbReference type="GO" id="GO:0003796">
    <property type="term" value="F:lysozyme activity"/>
    <property type="evidence" value="ECO:0000314"/>
    <property type="project" value="UniProtKB"/>
</dbReference>
<dbReference type="GO" id="GO:0050829">
    <property type="term" value="P:defense response to Gram-negative bacterium"/>
    <property type="evidence" value="ECO:0000314"/>
    <property type="project" value="UniProtKB"/>
</dbReference>
<dbReference type="GO" id="GO:0031640">
    <property type="term" value="P:killing of cells of another organism"/>
    <property type="evidence" value="ECO:0007669"/>
    <property type="project" value="UniProtKB-KW"/>
</dbReference>
<dbReference type="CDD" id="cd16890">
    <property type="entry name" value="lyz_i"/>
    <property type="match status" value="1"/>
</dbReference>
<dbReference type="FunFam" id="1.10.530.10:FF:000023">
    <property type="entry name" value="Invertebrate-type lysozyme"/>
    <property type="match status" value="1"/>
</dbReference>
<dbReference type="Gene3D" id="1.10.530.10">
    <property type="match status" value="1"/>
</dbReference>
<dbReference type="InterPro" id="IPR008597">
    <property type="entry name" value="Invert_lysozyme"/>
</dbReference>
<dbReference type="InterPro" id="IPR023346">
    <property type="entry name" value="Lysozyme-like_dom_sf"/>
</dbReference>
<dbReference type="PANTHER" id="PTHR11195">
    <property type="entry name" value="DESTABILASE-RELATED"/>
    <property type="match status" value="1"/>
</dbReference>
<dbReference type="PANTHER" id="PTHR11195:SF13">
    <property type="entry name" value="INVERTEBRATE-TYPE LYSOZYME 2-RELATED"/>
    <property type="match status" value="1"/>
</dbReference>
<dbReference type="Pfam" id="PF05497">
    <property type="entry name" value="Destabilase"/>
    <property type="match status" value="1"/>
</dbReference>
<dbReference type="SUPFAM" id="SSF53955">
    <property type="entry name" value="Lysozyme-like"/>
    <property type="match status" value="1"/>
</dbReference>
<dbReference type="PROSITE" id="PS51909">
    <property type="entry name" value="LYSOZYME_I"/>
    <property type="match status" value="1"/>
</dbReference>
<feature type="signal peptide" evidence="4">
    <location>
        <begin position="1"/>
        <end position="18"/>
    </location>
</feature>
<feature type="chain" id="PRO_0000374069" description="Lysozyme 3" evidence="4">
    <location>
        <begin position="19"/>
        <end position="187"/>
    </location>
</feature>
<feature type="domain" description="I-type lysozyme" evidence="3">
    <location>
        <begin position="68"/>
        <end position="183"/>
    </location>
</feature>
<feature type="active site" description="Proton donor" evidence="3">
    <location>
        <position position="83"/>
    </location>
</feature>
<feature type="active site" description="Nucleophile" evidence="3">
    <location>
        <position position="94"/>
    </location>
</feature>
<feature type="binding site" evidence="2">
    <location>
        <begin position="106"/>
        <end position="112"/>
    </location>
    <ligand>
        <name>substrate</name>
    </ligand>
</feature>
<feature type="binding site" evidence="2">
    <location>
        <position position="137"/>
    </location>
    <ligand>
        <name>substrate</name>
    </ligand>
</feature>
<feature type="binding site" evidence="2">
    <location>
        <begin position="158"/>
        <end position="160"/>
    </location>
    <ligand>
        <name>substrate</name>
    </ligand>
</feature>
<feature type="disulfide bond" evidence="3">
    <location>
        <begin position="75"/>
        <end position="151"/>
    </location>
</feature>
<feature type="disulfide bond" evidence="3">
    <location>
        <begin position="80"/>
        <end position="86"/>
    </location>
</feature>
<feature type="disulfide bond" evidence="3">
    <location>
        <begin position="91"/>
        <end position="100"/>
    </location>
</feature>
<feature type="disulfide bond" evidence="3">
    <location>
        <begin position="113"/>
        <end position="133"/>
    </location>
</feature>
<feature type="disulfide bond" evidence="3">
    <location>
        <begin position="123"/>
        <end position="129"/>
    </location>
</feature>
<feature type="disulfide bond" evidence="3">
    <location>
        <begin position="147"/>
        <end position="165"/>
    </location>
</feature>
<evidence type="ECO:0000250" key="1">
    <source>
        <dbReference type="UniProtKB" id="P83673"/>
    </source>
</evidence>
<evidence type="ECO:0000250" key="2">
    <source>
        <dbReference type="UniProtKB" id="Q8IU26"/>
    </source>
</evidence>
<evidence type="ECO:0000255" key="3">
    <source>
        <dbReference type="PROSITE-ProRule" id="PRU01257"/>
    </source>
</evidence>
<evidence type="ECO:0000269" key="4">
    <source>
    </source>
</evidence>
<evidence type="ECO:0000303" key="5">
    <source>
    </source>
</evidence>
<evidence type="ECO:0000305" key="6"/>
<evidence type="ECO:0000312" key="7">
    <source>
        <dbReference type="EMBL" id="BAG41979.1"/>
    </source>
</evidence>
<gene>
    <name evidence="7" type="primary">lysoz3</name>
</gene>
<comment type="function">
    <text evidence="4">Has antibacterial activity against the Gram-negative bacterium E.coli. No antibacterial activity detected against the Gram-negative bacterium V.vulnificus.</text>
</comment>
<comment type="catalytic activity">
    <reaction evidence="4">
        <text>Hydrolysis of (1-&gt;4)-beta-linkages between N-acetylmuramic acid and N-acetyl-D-glucosamine residues in a peptidoglycan and between N-acetyl-D-glucosamine residues in chitodextrins.</text>
        <dbReference type="EC" id="3.2.1.17"/>
    </reaction>
</comment>
<comment type="biophysicochemical properties">
    <phDependence>
        <text evidence="4">Optimum pH is 7.5-8.5.</text>
    </phDependence>
</comment>
<comment type="subcellular location">
    <subcellularLocation>
        <location evidence="1">Secreted</location>
    </subcellularLocation>
</comment>
<comment type="tissue specificity">
    <text evidence="4">Highest levels of expression detected in the digestive glands. Lower levels in the mantle, labial palps, gills and style-midgut sac, and lowest levels detected in the hemocytes. Not detected in the gonads.</text>
</comment>
<comment type="mass spectrometry" mass="17782.3" method="MALDI" evidence="4"/>
<comment type="similarity">
    <text evidence="3">Belongs to the glycosyl hydrolase 22 family. Type-I lysozyme subfamily.</text>
</comment>
<name>LYS3_CRAVI</name>
<sequence length="187" mass="19775">MNGLFLFCVATTAALAYGSDAPCTNSGGVCQDDHLACHNGHYQSGLCTGGAHRRCCLTSASHTGSFSTGIVSQQCLQCICNVESGCKAIGCHFDVNSDSCGYFQIKEGYWHDCGSPGSSWRSCANDLACASKCVQAYMSRYIGFSGCSHSCESYARIHNGGPAGCKHTNTLGYWSHVHAQGCSHNSK</sequence>
<reference evidence="6" key="1">
    <citation type="journal article" date="2010" name="BMC Evol. Biol.">
        <title>A new lysozyme from the eastern oyster, Crassostrea virginica, and a possible evolutionary pathway for i-type lysozymes in bivalves from host defense to digestion.</title>
        <authorList>
            <person name="Xue Q."/>
            <person name="Hellberg M.E."/>
            <person name="Schey K.L."/>
            <person name="Itoh N."/>
            <person name="Eytan R.I."/>
            <person name="Cooper R.K."/>
            <person name="La Peyre J.F."/>
        </authorList>
    </citation>
    <scope>NUCLEOTIDE SEQUENCE [MRNA]</scope>
    <scope>PROTEIN SEQUENCE OF 19-53 AND 55-186</scope>
    <scope>FUNCTION</scope>
    <scope>CATALYTIC ACTIVITY</scope>
    <scope>BIOPHYSICOCHEMICAL PROPERTIES</scope>
    <scope>TISSUE SPECIFICITY</scope>
    <scope>MASS SPECTROMETRY</scope>
</reference>
<keyword id="KW-0044">Antibiotic</keyword>
<keyword id="KW-0929">Antimicrobial</keyword>
<keyword id="KW-0081">Bacteriolytic enzyme</keyword>
<keyword id="KW-0903">Direct protein sequencing</keyword>
<keyword id="KW-1015">Disulfide bond</keyword>
<keyword id="KW-0326">Glycosidase</keyword>
<keyword id="KW-0378">Hydrolase</keyword>
<keyword id="KW-0964">Secreted</keyword>
<keyword id="KW-0732">Signal</keyword>
<protein>
    <recommendedName>
        <fullName evidence="7">Lysozyme 3</fullName>
        <ecNumber evidence="4">3.2.1.17</ecNumber>
    </recommendedName>
    <alternativeName>
        <fullName evidence="6">1,4-beta-N-acetylmuramidase 3</fullName>
    </alternativeName>
    <alternativeName>
        <fullName evidence="6">Invertebrate-type lysozyme 3</fullName>
    </alternativeName>
    <alternativeName>
        <fullName evidence="5">cv-lysozyme 3</fullName>
    </alternativeName>
</protein>